<dbReference type="EMBL" id="EF067921">
    <property type="protein sequence ID" value="ABK20740.1"/>
    <property type="molecule type" value="Genomic_DNA"/>
</dbReference>
<dbReference type="RefSeq" id="YP_874517.1">
    <property type="nucleotide sequence ID" value="NC_008589.1"/>
</dbReference>
<dbReference type="SMR" id="A0T0Q5"/>
<dbReference type="STRING" id="35128.A0T0Q5"/>
<dbReference type="GeneID" id="4524747"/>
<dbReference type="InParanoid" id="A0T0Q5"/>
<dbReference type="GO" id="GO:0009507">
    <property type="term" value="C:chloroplast"/>
    <property type="evidence" value="ECO:0007669"/>
    <property type="project" value="UniProtKB-SubCell"/>
</dbReference>
<dbReference type="GO" id="GO:0005762">
    <property type="term" value="C:mitochondrial large ribosomal subunit"/>
    <property type="evidence" value="ECO:0000318"/>
    <property type="project" value="GO_Central"/>
</dbReference>
<dbReference type="GO" id="GO:0070180">
    <property type="term" value="F:large ribosomal subunit rRNA binding"/>
    <property type="evidence" value="ECO:0000318"/>
    <property type="project" value="GO_Central"/>
</dbReference>
<dbReference type="GO" id="GO:0003735">
    <property type="term" value="F:structural constituent of ribosome"/>
    <property type="evidence" value="ECO:0000318"/>
    <property type="project" value="GO_Central"/>
</dbReference>
<dbReference type="GO" id="GO:0006412">
    <property type="term" value="P:translation"/>
    <property type="evidence" value="ECO:0000318"/>
    <property type="project" value="GO_Central"/>
</dbReference>
<dbReference type="CDD" id="cd00349">
    <property type="entry name" value="Ribosomal_L11"/>
    <property type="match status" value="1"/>
</dbReference>
<dbReference type="FunFam" id="1.10.10.250:FF:000001">
    <property type="entry name" value="50S ribosomal protein L11"/>
    <property type="match status" value="1"/>
</dbReference>
<dbReference type="FunFam" id="3.30.1550.10:FF:000001">
    <property type="entry name" value="50S ribosomal protein L11"/>
    <property type="match status" value="1"/>
</dbReference>
<dbReference type="Gene3D" id="1.10.10.250">
    <property type="entry name" value="Ribosomal protein L11, C-terminal domain"/>
    <property type="match status" value="1"/>
</dbReference>
<dbReference type="Gene3D" id="3.30.1550.10">
    <property type="entry name" value="Ribosomal protein L11/L12, N-terminal domain"/>
    <property type="match status" value="1"/>
</dbReference>
<dbReference type="HAMAP" id="MF_00736">
    <property type="entry name" value="Ribosomal_uL11"/>
    <property type="match status" value="1"/>
</dbReference>
<dbReference type="InterPro" id="IPR000911">
    <property type="entry name" value="Ribosomal_uL11"/>
</dbReference>
<dbReference type="InterPro" id="IPR006519">
    <property type="entry name" value="Ribosomal_uL11_bac-typ"/>
</dbReference>
<dbReference type="InterPro" id="IPR020783">
    <property type="entry name" value="Ribosomal_uL11_C"/>
</dbReference>
<dbReference type="InterPro" id="IPR036769">
    <property type="entry name" value="Ribosomal_uL11_C_sf"/>
</dbReference>
<dbReference type="InterPro" id="IPR020785">
    <property type="entry name" value="Ribosomal_uL11_CS"/>
</dbReference>
<dbReference type="InterPro" id="IPR020784">
    <property type="entry name" value="Ribosomal_uL11_N"/>
</dbReference>
<dbReference type="InterPro" id="IPR036796">
    <property type="entry name" value="Ribosomal_uL11_N_sf"/>
</dbReference>
<dbReference type="NCBIfam" id="TIGR01632">
    <property type="entry name" value="L11_bact"/>
    <property type="match status" value="1"/>
</dbReference>
<dbReference type="PANTHER" id="PTHR11661">
    <property type="entry name" value="60S RIBOSOMAL PROTEIN L12"/>
    <property type="match status" value="1"/>
</dbReference>
<dbReference type="PANTHER" id="PTHR11661:SF1">
    <property type="entry name" value="LARGE RIBOSOMAL SUBUNIT PROTEIN UL11M"/>
    <property type="match status" value="1"/>
</dbReference>
<dbReference type="Pfam" id="PF00298">
    <property type="entry name" value="Ribosomal_L11"/>
    <property type="match status" value="1"/>
</dbReference>
<dbReference type="Pfam" id="PF03946">
    <property type="entry name" value="Ribosomal_L11_N"/>
    <property type="match status" value="1"/>
</dbReference>
<dbReference type="SMART" id="SM00649">
    <property type="entry name" value="RL11"/>
    <property type="match status" value="1"/>
</dbReference>
<dbReference type="SUPFAM" id="SSF54747">
    <property type="entry name" value="Ribosomal L11/L12e N-terminal domain"/>
    <property type="match status" value="1"/>
</dbReference>
<dbReference type="SUPFAM" id="SSF46906">
    <property type="entry name" value="Ribosomal protein L11, C-terminal domain"/>
    <property type="match status" value="1"/>
</dbReference>
<dbReference type="PROSITE" id="PS00359">
    <property type="entry name" value="RIBOSOMAL_L11"/>
    <property type="match status" value="1"/>
</dbReference>
<comment type="function">
    <text evidence="1">Forms part of the ribosomal stalk which helps the ribosome interact with GTP-bound translation factors.</text>
</comment>
<comment type="subunit">
    <text evidence="1">Part of the ribosomal stalk of the 50S ribosomal subunit. Interacts with L10 and the large rRNA to form the base of the stalk. L10 forms an elongated spine to which L12 dimers bind in a sequential fashion forming a multimeric L10(L12)X complex.</text>
</comment>
<comment type="subcellular location">
    <subcellularLocation>
        <location>Plastid</location>
        <location>Chloroplast</location>
    </subcellularLocation>
</comment>
<comment type="similarity">
    <text evidence="1">Belongs to the universal ribosomal protein uL11 family.</text>
</comment>
<keyword id="KW-0150">Chloroplast</keyword>
<keyword id="KW-0934">Plastid</keyword>
<keyword id="KW-0687">Ribonucleoprotein</keyword>
<keyword id="KW-0689">Ribosomal protein</keyword>
<keyword id="KW-0694">RNA-binding</keyword>
<keyword id="KW-0699">rRNA-binding</keyword>
<name>RK11_THAPS</name>
<sequence>MPKKITALIKLALPAGKATPAPPVGPALGQHGVNIAAFCKEYNARTTEKMGLIIPVEISVYEDRSYTFILKTPPASVLLANAAKVKKGSATPNRVNVGSVTKAQLEEIANIKLPDLNTTEISSAIRIVEGTARNMGITVSD</sequence>
<accession>A0T0Q5</accession>
<evidence type="ECO:0000255" key="1">
    <source>
        <dbReference type="HAMAP-Rule" id="MF_00736"/>
    </source>
</evidence>
<evidence type="ECO:0000305" key="2"/>
<protein>
    <recommendedName>
        <fullName evidence="1">Large ribosomal subunit protein uL11c</fullName>
    </recommendedName>
    <alternativeName>
        <fullName evidence="2">50S ribosomal protein L11, chloroplastic</fullName>
    </alternativeName>
</protein>
<proteinExistence type="inferred from homology"/>
<geneLocation type="chloroplast"/>
<reference key="1">
    <citation type="journal article" date="2007" name="Mol. Genet. Genomics">
        <title>Chloroplast genomes of the diatoms Phaeodactylum tricornutum and Thalassiosira pseudonana: comparison with other plastid genomes of the red lineage.</title>
        <authorList>
            <person name="Oudot-Le Secq M.-P."/>
            <person name="Grimwood J."/>
            <person name="Shapiro H."/>
            <person name="Armbrust E.V."/>
            <person name="Bowler C."/>
            <person name="Green B.R."/>
        </authorList>
    </citation>
    <scope>NUCLEOTIDE SEQUENCE [LARGE SCALE GENOMIC DNA]</scope>
    <source>
        <strain>CCMP1335 / NEPCC58 / CCAP 1085/12</strain>
    </source>
</reference>
<gene>
    <name evidence="1" type="primary">rpl11</name>
</gene>
<organism>
    <name type="scientific">Thalassiosira pseudonana</name>
    <name type="common">Marine diatom</name>
    <name type="synonym">Cyclotella nana</name>
    <dbReference type="NCBI Taxonomy" id="35128"/>
    <lineage>
        <taxon>Eukaryota</taxon>
        <taxon>Sar</taxon>
        <taxon>Stramenopiles</taxon>
        <taxon>Ochrophyta</taxon>
        <taxon>Bacillariophyta</taxon>
        <taxon>Coscinodiscophyceae</taxon>
        <taxon>Thalassiosirophycidae</taxon>
        <taxon>Thalassiosirales</taxon>
        <taxon>Thalassiosiraceae</taxon>
        <taxon>Thalassiosira</taxon>
    </lineage>
</organism>
<feature type="chain" id="PRO_0000276326" description="Large ribosomal subunit protein uL11c">
    <location>
        <begin position="1"/>
        <end position="141"/>
    </location>
</feature>